<name>3MGH_LATSS</name>
<proteinExistence type="inferred from homology"/>
<gene>
    <name type="ordered locus">LCA_0543</name>
</gene>
<accession>Q38Y85</accession>
<dbReference type="EC" id="3.2.2.-" evidence="1"/>
<dbReference type="EMBL" id="CR936503">
    <property type="protein sequence ID" value="CAI54843.1"/>
    <property type="molecule type" value="Genomic_DNA"/>
</dbReference>
<dbReference type="RefSeq" id="WP_011374249.1">
    <property type="nucleotide sequence ID" value="NC_007576.1"/>
</dbReference>
<dbReference type="SMR" id="Q38Y85"/>
<dbReference type="STRING" id="314315.LCA_0543"/>
<dbReference type="KEGG" id="lsa:LCA_0543"/>
<dbReference type="eggNOG" id="COG2094">
    <property type="taxonomic scope" value="Bacteria"/>
</dbReference>
<dbReference type="HOGENOM" id="CLU_060471_2_0_9"/>
<dbReference type="OrthoDB" id="9794313at2"/>
<dbReference type="Proteomes" id="UP000002707">
    <property type="component" value="Chromosome"/>
</dbReference>
<dbReference type="GO" id="GO:0003905">
    <property type="term" value="F:alkylbase DNA N-glycosylase activity"/>
    <property type="evidence" value="ECO:0007669"/>
    <property type="project" value="InterPro"/>
</dbReference>
<dbReference type="GO" id="GO:0003677">
    <property type="term" value="F:DNA binding"/>
    <property type="evidence" value="ECO:0007669"/>
    <property type="project" value="InterPro"/>
</dbReference>
<dbReference type="GO" id="GO:0006284">
    <property type="term" value="P:base-excision repair"/>
    <property type="evidence" value="ECO:0007669"/>
    <property type="project" value="InterPro"/>
</dbReference>
<dbReference type="CDD" id="cd00540">
    <property type="entry name" value="AAG"/>
    <property type="match status" value="1"/>
</dbReference>
<dbReference type="FunFam" id="3.10.300.10:FF:000001">
    <property type="entry name" value="Putative 3-methyladenine DNA glycosylase"/>
    <property type="match status" value="1"/>
</dbReference>
<dbReference type="Gene3D" id="3.10.300.10">
    <property type="entry name" value="Methylpurine-DNA glycosylase (MPG)"/>
    <property type="match status" value="1"/>
</dbReference>
<dbReference type="HAMAP" id="MF_00527">
    <property type="entry name" value="3MGH"/>
    <property type="match status" value="1"/>
</dbReference>
<dbReference type="InterPro" id="IPR011034">
    <property type="entry name" value="Formyl_transferase-like_C_sf"/>
</dbReference>
<dbReference type="InterPro" id="IPR003180">
    <property type="entry name" value="MPG"/>
</dbReference>
<dbReference type="InterPro" id="IPR036995">
    <property type="entry name" value="MPG_sf"/>
</dbReference>
<dbReference type="NCBIfam" id="TIGR00567">
    <property type="entry name" value="3mg"/>
    <property type="match status" value="1"/>
</dbReference>
<dbReference type="PANTHER" id="PTHR10429">
    <property type="entry name" value="DNA-3-METHYLADENINE GLYCOSYLASE"/>
    <property type="match status" value="1"/>
</dbReference>
<dbReference type="PANTHER" id="PTHR10429:SF0">
    <property type="entry name" value="DNA-3-METHYLADENINE GLYCOSYLASE"/>
    <property type="match status" value="1"/>
</dbReference>
<dbReference type="Pfam" id="PF02245">
    <property type="entry name" value="Pur_DNA_glyco"/>
    <property type="match status" value="1"/>
</dbReference>
<dbReference type="SUPFAM" id="SSF50486">
    <property type="entry name" value="FMT C-terminal domain-like"/>
    <property type="match status" value="1"/>
</dbReference>
<sequence>MTTIQPAPMAFFTNRPTTEIARDLLGTHLLYTSHQGTLGGLIVETEAYMGAQDTAAHAYNGRRTPFSEPLYHEPGTIYIYQLRSFFLFDIVTQAVDQPQGVLIRAIEPTHGLAQMQRNRPNKPSVNLTNGPGKLMGALGIHDKQLTFKNVATAPLTIDLANRRQPRHITTAPRIGVNAKAASGQLPYRYFITGNPYVSGTLKKDWDREQHGWL</sequence>
<protein>
    <recommendedName>
        <fullName evidence="1">Putative 3-methyladenine DNA glycosylase</fullName>
        <ecNumber evidence="1">3.2.2.-</ecNumber>
    </recommendedName>
</protein>
<organism>
    <name type="scientific">Latilactobacillus sakei subsp. sakei (strain 23K)</name>
    <name type="common">Lactobacillus sakei subsp. sakei</name>
    <dbReference type="NCBI Taxonomy" id="314315"/>
    <lineage>
        <taxon>Bacteria</taxon>
        <taxon>Bacillati</taxon>
        <taxon>Bacillota</taxon>
        <taxon>Bacilli</taxon>
        <taxon>Lactobacillales</taxon>
        <taxon>Lactobacillaceae</taxon>
        <taxon>Latilactobacillus</taxon>
    </lineage>
</organism>
<evidence type="ECO:0000255" key="1">
    <source>
        <dbReference type="HAMAP-Rule" id="MF_00527"/>
    </source>
</evidence>
<comment type="similarity">
    <text evidence="1">Belongs to the DNA glycosylase MPG family.</text>
</comment>
<reference key="1">
    <citation type="journal article" date="2005" name="Nat. Biotechnol.">
        <title>The complete genome sequence of the meat-borne lactic acid bacterium Lactobacillus sakei 23K.</title>
        <authorList>
            <person name="Chaillou S."/>
            <person name="Champomier-Verges M.-C."/>
            <person name="Cornet M."/>
            <person name="Crutz-Le Coq A.-M."/>
            <person name="Dudez A.-M."/>
            <person name="Martin V."/>
            <person name="Beaufils S."/>
            <person name="Darbon-Rongere E."/>
            <person name="Bossy R."/>
            <person name="Loux V."/>
            <person name="Zagorec M."/>
        </authorList>
    </citation>
    <scope>NUCLEOTIDE SEQUENCE [LARGE SCALE GENOMIC DNA]</scope>
    <source>
        <strain>23K</strain>
    </source>
</reference>
<keyword id="KW-0227">DNA damage</keyword>
<keyword id="KW-0234">DNA repair</keyword>
<keyword id="KW-0378">Hydrolase</keyword>
<keyword id="KW-1185">Reference proteome</keyword>
<feature type="chain" id="PRO_0000265029" description="Putative 3-methyladenine DNA glycosylase">
    <location>
        <begin position="1"/>
        <end position="213"/>
    </location>
</feature>